<protein>
    <recommendedName>
        <fullName>Transmembrane protein 41 homolog</fullName>
    </recommendedName>
</protein>
<proteinExistence type="inferred from homology"/>
<feature type="chain" id="PRO_0000291945" description="Transmembrane protein 41 homolog">
    <location>
        <begin position="1"/>
        <end position="246"/>
    </location>
</feature>
<feature type="transmembrane region" description="Helical" evidence="1">
    <location>
        <begin position="12"/>
        <end position="32"/>
    </location>
</feature>
<feature type="transmembrane region" description="Helical" evidence="1">
    <location>
        <begin position="68"/>
        <end position="88"/>
    </location>
</feature>
<feature type="transmembrane region" description="Helical" evidence="1">
    <location>
        <begin position="101"/>
        <end position="123"/>
    </location>
</feature>
<feature type="transmembrane region" description="Helical" evidence="1">
    <location>
        <begin position="159"/>
        <end position="179"/>
    </location>
</feature>
<feature type="transmembrane region" description="Helical" evidence="1">
    <location>
        <begin position="182"/>
        <end position="202"/>
    </location>
</feature>
<feature type="transmembrane region" description="Helical" evidence="1">
    <location>
        <begin position="219"/>
        <end position="239"/>
    </location>
</feature>
<accession>O62126</accession>
<keyword id="KW-0472">Membrane</keyword>
<keyword id="KW-1185">Reference proteome</keyword>
<keyword id="KW-0812">Transmembrane</keyword>
<keyword id="KW-1133">Transmembrane helix</keyword>
<gene>
    <name type="primary">tag-175</name>
    <name type="ORF">D2013.10</name>
</gene>
<name>TM41_CAEEL</name>
<reference key="1">
    <citation type="journal article" date="1998" name="Science">
        <title>Genome sequence of the nematode C. elegans: a platform for investigating biology.</title>
        <authorList>
            <consortium name="The C. elegans sequencing consortium"/>
        </authorList>
    </citation>
    <scope>NUCLEOTIDE SEQUENCE [LARGE SCALE GENOMIC DNA]</scope>
    <source>
        <strain>Bristol N2</strain>
    </source>
</reference>
<dbReference type="EMBL" id="Z47808">
    <property type="protein sequence ID" value="CAA87776.1"/>
    <property type="molecule type" value="Genomic_DNA"/>
</dbReference>
<dbReference type="PIR" id="T20341">
    <property type="entry name" value="T20341"/>
</dbReference>
<dbReference type="BioGRID" id="48748">
    <property type="interactions" value="2"/>
</dbReference>
<dbReference type="DIP" id="DIP-25887N"/>
<dbReference type="FunCoup" id="O62126">
    <property type="interactions" value="3019"/>
</dbReference>
<dbReference type="STRING" id="6239.D2013.10.1"/>
<dbReference type="PaxDb" id="6239-D2013.10"/>
<dbReference type="EnsemblMetazoa" id="D2013.10.1">
    <property type="protein sequence ID" value="D2013.10.1"/>
    <property type="gene ID" value="WBGene00006520"/>
</dbReference>
<dbReference type="KEGG" id="cel:CELE_D2013.10"/>
<dbReference type="UCSC" id="D2013.10">
    <property type="organism name" value="c. elegans"/>
</dbReference>
<dbReference type="AGR" id="WB:WBGene00006520"/>
<dbReference type="CTD" id="183942"/>
<dbReference type="WormBase" id="D2013.10">
    <property type="protein sequence ID" value="CE17622"/>
    <property type="gene ID" value="WBGene00006520"/>
    <property type="gene designation" value="tag-175"/>
</dbReference>
<dbReference type="eggNOG" id="KOG3140">
    <property type="taxonomic scope" value="Eukaryota"/>
</dbReference>
<dbReference type="GeneTree" id="ENSGT00940000156956"/>
<dbReference type="HOGENOM" id="CLU_038944_0_1_1"/>
<dbReference type="InParanoid" id="O62126"/>
<dbReference type="OMA" id="CIKIPRD"/>
<dbReference type="OrthoDB" id="3364966at2759"/>
<dbReference type="PhylomeDB" id="O62126"/>
<dbReference type="PRO" id="PR:O62126"/>
<dbReference type="Proteomes" id="UP000001940">
    <property type="component" value="Chromosome II"/>
</dbReference>
<dbReference type="Bgee" id="WBGene00006520">
    <property type="expression patterns" value="Expressed in pharyngeal muscle cell (C elegans) and 4 other cell types or tissues"/>
</dbReference>
<dbReference type="GO" id="GO:0005789">
    <property type="term" value="C:endoplasmic reticulum membrane"/>
    <property type="evidence" value="ECO:0000318"/>
    <property type="project" value="GO_Central"/>
</dbReference>
<dbReference type="GO" id="GO:0000045">
    <property type="term" value="P:autophagosome assembly"/>
    <property type="evidence" value="ECO:0000318"/>
    <property type="project" value="GO_Central"/>
</dbReference>
<dbReference type="InterPro" id="IPR045014">
    <property type="entry name" value="TM41A/B"/>
</dbReference>
<dbReference type="InterPro" id="IPR032816">
    <property type="entry name" value="VTT_dom"/>
</dbReference>
<dbReference type="PANTHER" id="PTHR43220">
    <property type="match status" value="1"/>
</dbReference>
<dbReference type="PANTHER" id="PTHR43220:SF18">
    <property type="entry name" value="TRANSMEMBRANE PROTEIN 41B"/>
    <property type="match status" value="1"/>
</dbReference>
<dbReference type="Pfam" id="PF09335">
    <property type="entry name" value="VTT_dom"/>
    <property type="match status" value="1"/>
</dbReference>
<organism>
    <name type="scientific">Caenorhabditis elegans</name>
    <dbReference type="NCBI Taxonomy" id="6239"/>
    <lineage>
        <taxon>Eukaryota</taxon>
        <taxon>Metazoa</taxon>
        <taxon>Ecdysozoa</taxon>
        <taxon>Nematoda</taxon>
        <taxon>Chromadorea</taxon>
        <taxon>Rhabditida</taxon>
        <taxon>Rhabditina</taxon>
        <taxon>Rhabditomorpha</taxon>
        <taxon>Rhabditoidea</taxon>
        <taxon>Rhabditidae</taxon>
        <taxon>Peloderinae</taxon>
        <taxon>Caenorhabditis</taxon>
    </lineage>
</organism>
<sequence length="246" mass="27502">METKSSQTSHPWLVLLIFATFAVSIFAVYSNFPEVSADEKVHLKYPRNLEDAKQLGRVLSKYKENNYSVVLCGVIVVYVFLQSFAIPGSIFLTILSGYLFPFYVAIVLVCSCSATGAAICYTISKLFGRSFVLQKFPERIAKWQDDLSKHRDDFLNYMIFLRVTPIVPNWLINIASPVLDVPLAPFFWGTFLGVAPPSFLYIQAGSTLEQLSHTSVAWSWSSIVLLTGSAILSLAPILLKKKLKSD</sequence>
<evidence type="ECO:0000255" key="1"/>
<evidence type="ECO:0000305" key="2"/>
<comment type="subcellular location">
    <subcellularLocation>
        <location evidence="2">Membrane</location>
        <topology evidence="2">Multi-pass membrane protein</topology>
    </subcellularLocation>
</comment>
<comment type="similarity">
    <text evidence="2">Belongs to the TMEM41 family.</text>
</comment>